<gene>
    <name evidence="1" type="primary">fadJ</name>
    <name type="ordered locus">YPN_2200</name>
    <name type="ORF">YP516_2465</name>
</gene>
<organism>
    <name type="scientific">Yersinia pestis bv. Antiqua (strain Nepal516)</name>
    <dbReference type="NCBI Taxonomy" id="377628"/>
    <lineage>
        <taxon>Bacteria</taxon>
        <taxon>Pseudomonadati</taxon>
        <taxon>Pseudomonadota</taxon>
        <taxon>Gammaproteobacteria</taxon>
        <taxon>Enterobacterales</taxon>
        <taxon>Yersiniaceae</taxon>
        <taxon>Yersinia</taxon>
    </lineage>
</organism>
<accession>Q1CHK2</accession>
<accession>C4GU81</accession>
<proteinExistence type="inferred from homology"/>
<dbReference type="EC" id="4.2.1.17" evidence="1"/>
<dbReference type="EC" id="5.1.2.3" evidence="1"/>
<dbReference type="EC" id="1.1.1.35" evidence="1"/>
<dbReference type="EMBL" id="CP000305">
    <property type="protein sequence ID" value="ABG18528.1"/>
    <property type="status" value="ALT_INIT"/>
    <property type="molecule type" value="Genomic_DNA"/>
</dbReference>
<dbReference type="EMBL" id="ACNQ01000013">
    <property type="protein sequence ID" value="EEO76268.1"/>
    <property type="status" value="ALT_INIT"/>
    <property type="molecule type" value="Genomic_DNA"/>
</dbReference>
<dbReference type="SMR" id="Q1CHK2"/>
<dbReference type="KEGG" id="ypn:YPN_2200"/>
<dbReference type="HOGENOM" id="CLU_009834_16_1_6"/>
<dbReference type="UniPathway" id="UPA00659"/>
<dbReference type="Proteomes" id="UP000008936">
    <property type="component" value="Chromosome"/>
</dbReference>
<dbReference type="GO" id="GO:0005737">
    <property type="term" value="C:cytoplasm"/>
    <property type="evidence" value="ECO:0007669"/>
    <property type="project" value="UniProtKB-SubCell"/>
</dbReference>
<dbReference type="GO" id="GO:0008692">
    <property type="term" value="F:3-hydroxybutyryl-CoA epimerase activity"/>
    <property type="evidence" value="ECO:0007669"/>
    <property type="project" value="UniProtKB-UniRule"/>
</dbReference>
<dbReference type="GO" id="GO:0004300">
    <property type="term" value="F:enoyl-CoA hydratase activity"/>
    <property type="evidence" value="ECO:0007669"/>
    <property type="project" value="UniProtKB-UniRule"/>
</dbReference>
<dbReference type="GO" id="GO:0016509">
    <property type="term" value="F:long-chain-3-hydroxyacyl-CoA dehydrogenase activity"/>
    <property type="evidence" value="ECO:0007669"/>
    <property type="project" value="TreeGrafter"/>
</dbReference>
<dbReference type="GO" id="GO:0070403">
    <property type="term" value="F:NAD+ binding"/>
    <property type="evidence" value="ECO:0007669"/>
    <property type="project" value="InterPro"/>
</dbReference>
<dbReference type="GO" id="GO:0006635">
    <property type="term" value="P:fatty acid beta-oxidation"/>
    <property type="evidence" value="ECO:0007669"/>
    <property type="project" value="UniProtKB-UniRule"/>
</dbReference>
<dbReference type="CDD" id="cd06558">
    <property type="entry name" value="crotonase-like"/>
    <property type="match status" value="1"/>
</dbReference>
<dbReference type="FunFam" id="1.10.1040.50:FF:000003">
    <property type="entry name" value="Fatty acid oxidation complex subunit alpha"/>
    <property type="match status" value="1"/>
</dbReference>
<dbReference type="FunFam" id="3.90.226.10:FF:000011">
    <property type="entry name" value="Fatty acid oxidation complex subunit alpha"/>
    <property type="match status" value="1"/>
</dbReference>
<dbReference type="FunFam" id="3.40.50.720:FF:000009">
    <property type="entry name" value="Fatty oxidation complex, alpha subunit"/>
    <property type="match status" value="1"/>
</dbReference>
<dbReference type="Gene3D" id="1.10.1040.50">
    <property type="match status" value="1"/>
</dbReference>
<dbReference type="Gene3D" id="3.90.226.10">
    <property type="entry name" value="2-enoyl-CoA Hydratase, Chain A, domain 1"/>
    <property type="match status" value="1"/>
</dbReference>
<dbReference type="Gene3D" id="3.40.50.720">
    <property type="entry name" value="NAD(P)-binding Rossmann-like Domain"/>
    <property type="match status" value="1"/>
</dbReference>
<dbReference type="HAMAP" id="MF_01617">
    <property type="entry name" value="FadJ"/>
    <property type="match status" value="1"/>
</dbReference>
<dbReference type="InterPro" id="IPR006180">
    <property type="entry name" value="3-OHacyl-CoA_DH_CS"/>
</dbReference>
<dbReference type="InterPro" id="IPR006176">
    <property type="entry name" value="3-OHacyl-CoA_DH_NAD-bd"/>
</dbReference>
<dbReference type="InterPro" id="IPR006108">
    <property type="entry name" value="3HC_DH_C"/>
</dbReference>
<dbReference type="InterPro" id="IPR008927">
    <property type="entry name" value="6-PGluconate_DH-like_C_sf"/>
</dbReference>
<dbReference type="InterPro" id="IPR029045">
    <property type="entry name" value="ClpP/crotonase-like_dom_sf"/>
</dbReference>
<dbReference type="InterPro" id="IPR001753">
    <property type="entry name" value="Enoyl-CoA_hydra/iso"/>
</dbReference>
<dbReference type="InterPro" id="IPR050136">
    <property type="entry name" value="FA_oxidation_alpha_subunit"/>
</dbReference>
<dbReference type="InterPro" id="IPR012802">
    <property type="entry name" value="FadJ"/>
</dbReference>
<dbReference type="InterPro" id="IPR036291">
    <property type="entry name" value="NAD(P)-bd_dom_sf"/>
</dbReference>
<dbReference type="NCBIfam" id="TIGR02440">
    <property type="entry name" value="FadJ"/>
    <property type="match status" value="1"/>
</dbReference>
<dbReference type="NCBIfam" id="NF008363">
    <property type="entry name" value="PRK11154.1"/>
    <property type="match status" value="1"/>
</dbReference>
<dbReference type="PANTHER" id="PTHR43612">
    <property type="entry name" value="TRIFUNCTIONAL ENZYME SUBUNIT ALPHA"/>
    <property type="match status" value="1"/>
</dbReference>
<dbReference type="PANTHER" id="PTHR43612:SF3">
    <property type="entry name" value="TRIFUNCTIONAL ENZYME SUBUNIT ALPHA, MITOCHONDRIAL"/>
    <property type="match status" value="1"/>
</dbReference>
<dbReference type="Pfam" id="PF00725">
    <property type="entry name" value="3HCDH"/>
    <property type="match status" value="2"/>
</dbReference>
<dbReference type="Pfam" id="PF02737">
    <property type="entry name" value="3HCDH_N"/>
    <property type="match status" value="1"/>
</dbReference>
<dbReference type="Pfam" id="PF00378">
    <property type="entry name" value="ECH_1"/>
    <property type="match status" value="1"/>
</dbReference>
<dbReference type="SUPFAM" id="SSF48179">
    <property type="entry name" value="6-phosphogluconate dehydrogenase C-terminal domain-like"/>
    <property type="match status" value="2"/>
</dbReference>
<dbReference type="SUPFAM" id="SSF52096">
    <property type="entry name" value="ClpP/crotonase"/>
    <property type="match status" value="1"/>
</dbReference>
<dbReference type="SUPFAM" id="SSF51735">
    <property type="entry name" value="NAD(P)-binding Rossmann-fold domains"/>
    <property type="match status" value="1"/>
</dbReference>
<dbReference type="PROSITE" id="PS00067">
    <property type="entry name" value="3HCDH"/>
    <property type="match status" value="1"/>
</dbReference>
<feature type="chain" id="PRO_0000273991" description="Fatty acid oxidation complex subunit alpha">
    <location>
        <begin position="1"/>
        <end position="747"/>
    </location>
</feature>
<feature type="region of interest" description="Enoyl-CoA hydratase" evidence="1">
    <location>
        <begin position="8"/>
        <end position="197"/>
    </location>
</feature>
<feature type="region of interest" description="3-hydroxyacyl-CoA dehydrogenase" evidence="1">
    <location>
        <begin position="313"/>
        <end position="741"/>
    </location>
</feature>
<feature type="region of interest" description="Disordered" evidence="2">
    <location>
        <begin position="590"/>
        <end position="614"/>
    </location>
</feature>
<feature type="compositionally biased region" description="Polar residues" evidence="2">
    <location>
        <begin position="593"/>
        <end position="610"/>
    </location>
</feature>
<feature type="site" description="Important for catalytic activity" evidence="1">
    <location>
        <position position="125"/>
    </location>
</feature>
<feature type="site" description="Important for catalytic activity" evidence="1">
    <location>
        <position position="147"/>
    </location>
</feature>
<sequence length="747" mass="80695">MGASATNSVTHPAFTLNVRPDNIGIITIDVVGDKVNTLKAEFADQIATILQQAHALPKLQGLVIVSGKPDSFIAGADITMIAACRTAHDARVLAQKGQSILAQIAAFPVPVVAAIHGACLGGGLELALACHSRICSLDDKTVLGLPEVQLGLLPGSGGTQRLPRLVGVSKALDMILTGKQIRPRQALKMGLVDDVVPRDILLDVAIQRAKAGWLNRRALPWQERLLSGPLGKALLFRIVRKKTLAKTRGHYPAAERIIDVVRKGLDQGGPSGYEAEARAFGELAMSPQSAALRSLFFATTSLKKETGSAATARAIHRVGVLGGGLMGGGIANVTATRAGLPVRIKDINPQGINQALKYTWDALGKRVRSKRMRPTEQQRQMMLISGSTDYRGFERVDIVVEAVFEDLSLKQQMVADIERFGAAHTIFASNTSSLPISQIAALAQRPEQVIGLHYFSPVDKMPLVEVIPHEKTSEETIATTVALARKQGKTAIVVADRAGFYVNRILAPYINEAARCLLDGEPIESVDNALVDFGFPVGPMMLLDEVGIDVATKIMPILVEQLGPRFAAPPSFDVILKDGRKGRKNGRGFYLYSNPTKNSSPTKNGNSPAKRNSFKWRKNKVKPVDASIYTLLGVTPKAHLGAGVITQRCTMLMLNEAVRCLDESIIRNPRDGDIGAVFGIGFPPFLGGPFRYLDSLGADKVVQALRLLVQQYGERFEPCQRLVTMAEQQQQFYPVDANIDEVTDVAS</sequence>
<reference key="1">
    <citation type="journal article" date="2006" name="J. Bacteriol.">
        <title>Complete genome sequence of Yersinia pestis strains Antiqua and Nepal516: evidence of gene reduction in an emerging pathogen.</title>
        <authorList>
            <person name="Chain P.S.G."/>
            <person name="Hu P."/>
            <person name="Malfatti S.A."/>
            <person name="Radnedge L."/>
            <person name="Larimer F."/>
            <person name="Vergez L.M."/>
            <person name="Worsham P."/>
            <person name="Chu M.C."/>
            <person name="Andersen G.L."/>
        </authorList>
    </citation>
    <scope>NUCLEOTIDE SEQUENCE [LARGE SCALE GENOMIC DNA]</scope>
    <source>
        <strain>Nepal516</strain>
    </source>
</reference>
<reference key="2">
    <citation type="submission" date="2009-04" db="EMBL/GenBank/DDBJ databases">
        <title>Yersinia pestis Nepal516A whole genome shotgun sequencing project.</title>
        <authorList>
            <person name="Plunkett G. III"/>
            <person name="Anderson B.D."/>
            <person name="Baumler D.J."/>
            <person name="Burland V."/>
            <person name="Cabot E.L."/>
            <person name="Glasner J.D."/>
            <person name="Mau B."/>
            <person name="Neeno-Eckwall E."/>
            <person name="Perna N.T."/>
            <person name="Munk A.C."/>
            <person name="Tapia R."/>
            <person name="Green L.D."/>
            <person name="Rogers Y.C."/>
            <person name="Detter J.C."/>
            <person name="Bruce D.C."/>
            <person name="Brettin T.S."/>
        </authorList>
    </citation>
    <scope>NUCLEOTIDE SEQUENCE [LARGE SCALE GENOMIC DNA]</scope>
    <source>
        <strain>Nepal516</strain>
    </source>
</reference>
<evidence type="ECO:0000255" key="1">
    <source>
        <dbReference type="HAMAP-Rule" id="MF_01617"/>
    </source>
</evidence>
<evidence type="ECO:0000256" key="2">
    <source>
        <dbReference type="SAM" id="MobiDB-lite"/>
    </source>
</evidence>
<evidence type="ECO:0000305" key="3"/>
<protein>
    <recommendedName>
        <fullName evidence="1">Fatty acid oxidation complex subunit alpha</fullName>
    </recommendedName>
    <domain>
        <recommendedName>
            <fullName evidence="1">Enoyl-CoA hydratase/3-hydroxybutyryl-CoA epimerase</fullName>
            <ecNumber evidence="1">4.2.1.17</ecNumber>
            <ecNumber evidence="1">5.1.2.3</ecNumber>
        </recommendedName>
    </domain>
    <domain>
        <recommendedName>
            <fullName evidence="1">3-hydroxyacyl-CoA dehydrogenase</fullName>
            <ecNumber evidence="1">1.1.1.35</ecNumber>
        </recommendedName>
    </domain>
</protein>
<keyword id="KW-0963">Cytoplasm</keyword>
<keyword id="KW-0276">Fatty acid metabolism</keyword>
<keyword id="KW-0413">Isomerase</keyword>
<keyword id="KW-0442">Lipid degradation</keyword>
<keyword id="KW-0443">Lipid metabolism</keyword>
<keyword id="KW-0456">Lyase</keyword>
<keyword id="KW-0511">Multifunctional enzyme</keyword>
<keyword id="KW-0520">NAD</keyword>
<keyword id="KW-0560">Oxidoreductase</keyword>
<name>FADJ_YERPN</name>
<comment type="function">
    <text evidence="1">Catalyzes the formation of a hydroxyacyl-CoA by addition of water on enoyl-CoA. Also exhibits 3-hydroxyacyl-CoA epimerase and 3-hydroxyacyl-CoA dehydrogenase activities.</text>
</comment>
<comment type="catalytic activity">
    <reaction evidence="1">
        <text>a (3S)-3-hydroxyacyl-CoA = a (2E)-enoyl-CoA + H2O</text>
        <dbReference type="Rhea" id="RHEA:16105"/>
        <dbReference type="ChEBI" id="CHEBI:15377"/>
        <dbReference type="ChEBI" id="CHEBI:57318"/>
        <dbReference type="ChEBI" id="CHEBI:58856"/>
        <dbReference type="EC" id="4.2.1.17"/>
    </reaction>
</comment>
<comment type="catalytic activity">
    <reaction evidence="1">
        <text>a 4-saturated-(3S)-3-hydroxyacyl-CoA = a (3E)-enoyl-CoA + H2O</text>
        <dbReference type="Rhea" id="RHEA:20724"/>
        <dbReference type="ChEBI" id="CHEBI:15377"/>
        <dbReference type="ChEBI" id="CHEBI:58521"/>
        <dbReference type="ChEBI" id="CHEBI:137480"/>
        <dbReference type="EC" id="4.2.1.17"/>
    </reaction>
</comment>
<comment type="catalytic activity">
    <reaction evidence="1">
        <text>a (3S)-3-hydroxyacyl-CoA + NAD(+) = a 3-oxoacyl-CoA + NADH + H(+)</text>
        <dbReference type="Rhea" id="RHEA:22432"/>
        <dbReference type="ChEBI" id="CHEBI:15378"/>
        <dbReference type="ChEBI" id="CHEBI:57318"/>
        <dbReference type="ChEBI" id="CHEBI:57540"/>
        <dbReference type="ChEBI" id="CHEBI:57945"/>
        <dbReference type="ChEBI" id="CHEBI:90726"/>
        <dbReference type="EC" id="1.1.1.35"/>
    </reaction>
</comment>
<comment type="catalytic activity">
    <reaction evidence="1">
        <text>(3S)-3-hydroxybutanoyl-CoA = (3R)-3-hydroxybutanoyl-CoA</text>
        <dbReference type="Rhea" id="RHEA:21760"/>
        <dbReference type="ChEBI" id="CHEBI:57315"/>
        <dbReference type="ChEBI" id="CHEBI:57316"/>
        <dbReference type="EC" id="5.1.2.3"/>
    </reaction>
</comment>
<comment type="pathway">
    <text evidence="1">Lipid metabolism; fatty acid beta-oxidation.</text>
</comment>
<comment type="subunit">
    <text evidence="1">Heterotetramer of two alpha chains (FadJ) and two beta chains (FadI).</text>
</comment>
<comment type="subcellular location">
    <subcellularLocation>
        <location evidence="1">Cytoplasm</location>
    </subcellularLocation>
</comment>
<comment type="similarity">
    <text evidence="1">In the N-terminal section; belongs to the enoyl-CoA hydratase/isomerase family.</text>
</comment>
<comment type="similarity">
    <text evidence="1">In the central section; belongs to the 3-hydroxyacyl-CoA dehydrogenase family.</text>
</comment>
<comment type="sequence caution" evidence="3">
    <conflict type="erroneous initiation">
        <sequence resource="EMBL-CDS" id="ABG18528"/>
    </conflict>
</comment>
<comment type="sequence caution" evidence="3">
    <conflict type="erroneous initiation">
        <sequence resource="EMBL-CDS" id="EEO76268"/>
    </conflict>
</comment>